<feature type="initiator methionine" description="Removed" evidence="2">
    <location>
        <position position="1"/>
    </location>
</feature>
<feature type="chain" id="PRO_0000191804" description="Parafibromin">
    <location>
        <begin position="2"/>
        <end position="531"/>
    </location>
</feature>
<feature type="region of interest" description="Interaction with POLR2A and PAF1" evidence="1">
    <location>
        <begin position="200"/>
        <end position="531"/>
    </location>
</feature>
<feature type="region of interest" description="Interaction with CTNNB1" evidence="1">
    <location>
        <begin position="200"/>
        <end position="250"/>
    </location>
</feature>
<feature type="region of interest" description="Disordered" evidence="3">
    <location>
        <begin position="260"/>
        <end position="292"/>
    </location>
</feature>
<feature type="region of interest" description="Disordered" evidence="3">
    <location>
        <begin position="325"/>
        <end position="358"/>
    </location>
</feature>
<feature type="short sequence motif" description="Nuclear localization signal" evidence="1">
    <location>
        <begin position="125"/>
        <end position="139"/>
    </location>
</feature>
<feature type="compositionally biased region" description="Pro residues" evidence="3">
    <location>
        <begin position="338"/>
        <end position="352"/>
    </location>
</feature>
<feature type="modified residue" description="N-acetylalanine" evidence="2">
    <location>
        <position position="2"/>
    </location>
</feature>
<feature type="modified residue" description="Phosphoserine" evidence="2">
    <location>
        <position position="212"/>
    </location>
</feature>
<feature type="cross-link" description="Glycyl lysine isopeptide (Lys-Gly) (interchain with G-Cter in SUMO2)" evidence="2">
    <location>
        <position position="198"/>
    </location>
</feature>
<feature type="cross-link" description="Glycyl lysine isopeptide (Lys-Gly) (interchain with G-Cter in SUMO2)" evidence="2">
    <location>
        <position position="301"/>
    </location>
</feature>
<feature type="cross-link" description="Glycyl lysine isopeptide (Lys-Gly) (interchain with G-Cter in SUMO2)" evidence="2">
    <location>
        <position position="308"/>
    </location>
</feature>
<feature type="cross-link" description="Glycyl lysine isopeptide (Lys-Gly) (interchain with G-Cter in SUMO2)" evidence="2">
    <location>
        <position position="321"/>
    </location>
</feature>
<name>CDC73_MOUSE</name>
<sequence length="531" mass="60577">MADVLSVLRQYNIQKKEIVVKGDEVIFGEFSWPKNVKTNYVVWGTGKEGQPREYYTLDSILFLLNNVHLSHPVYVRRAATENIPVVRRPDRKDLLGYLNGEASTSASIDRSAPLEIGLQRSTQVKRAADEVLAEAKKPRIEDEECVRLDKERLAARLEGHKEGIVQTEQIRSLSEAMSVEKIAAIKAKIMAKKRSTIKTDLDDDITALKQRSFVDAEVDVTRDIVSRERVWRTRTTILQSTGKNFSKNIFAILQSVKAREEGRAPEQRPAPNAAPVDPTLRTKQPIPAAYNRYDQERFKGKEETEGFKIDTMGTYHGMTLKSVTEGASARKTQTPAAQPVPRPVSQARPPPNQKKGSRTPIIIIPAATTSLITMLNAKDLLQDLKFVPSDEKKKQGCQRENETLIQRRKDQMQPGGTAISVTVPYRVVDQPLKLMPQDWDRVVAVFVQGPAWQFKGWPWLLPDGSPVDIFAKIKAFHLKYDEVRLDPNVQKWDVTVLELSYHKRHLDRPVFLRFWETLDRYMVKHKSHLRF</sequence>
<comment type="function">
    <text evidence="1 5">Tumor suppressor probably involved in transcriptional and post-transcriptional control pathways. May be involved in cell cycle progression through the regulation of cyclin D1/PRAD1 expression. Component of the PAF1 complex (PAF1C) which has multiple functions during transcription by RNA polymerase II and is implicated in regulation of development and maintenance of embryonic stem cell pluripotency. PAF1C associates with RNA polymerase II through interaction with POLR2A CTD non-phosphorylated and 'Ser-2'- and 'Ser-5'-phosphorylated forms and is involved in transcriptional elongation, acting both independently and synergistically with TCEA1 and in cooperation with the DSIF complex and HTATSF1. PAF1C is required for transcription of Hox and Wnt target genes. PAF1C is involved in hematopoiesis and stimulates transcriptional activity of KMT2A/MLL1. PAF1C is involved in histone modifications such as ubiquitination of histone H2B and methylation on histone H3 'Lys-4' (H3K4me3). PAF1C recruits the RNF20/40 E3 ubiquitin-protein ligase complex and the E2 enzyme UBE2A or UBE2B to chromatin which mediate monoubiquitination of 'Lys-120' of histone H2B (H2BK120ub1); UB2A/B-mediated H2B ubiquitination is proposed to be coupled to transcription. PAF1C is involved in mRNA 3' end formation probably through association with cleavage and poly(A) factors. Connects PAF1C with the cleavage and polyadenylation specificity factor (CPSF) complex and the cleavage stimulation factor (CSTF) complex, and with Wnt signaling. Involved in polyadenylation of mRNA precursors (By similarity).</text>
</comment>
<comment type="subunit">
    <text evidence="2 6 7">Component of the PAF1 complex, which consists of CDC73, PAF1, LEO1, CTR9, RTF1 and SKIC8. The PAF1 complex interacts with PHF5A (PubMed:27749823). Within the PAF1 complex interacts directly with PHF5A (PubMed:27749823). Interacts with POLR2A, CPSF1, CPSF4, CSTF2, KMT2A/MLL1 and CTNNB1. Interacts with a Set1-like complex that has histone methyltransferase activity and methylates histone H3. Found in a complex with BCL9L or BCL9, CDC73, CTNNB1 and PYGO1 indicative for the participation in a nuclear Wnt signaling complex. Interacts with PTPN11 (By similarity). Interacts with SETD5 (PubMed:27864380).</text>
</comment>
<comment type="subcellular location">
    <subcellularLocation>
        <location evidence="1">Nucleus</location>
    </subcellularLocation>
</comment>
<comment type="tissue specificity">
    <text evidence="4">Found in the adrenal gland, kidney, heart, ovary and liver.</text>
</comment>
<comment type="PTM">
    <text evidence="2">Phosphorylated. Dephosphorylated by PTPN11.</text>
</comment>
<comment type="similarity">
    <text evidence="8">Belongs to the CDC73 family.</text>
</comment>
<protein>
    <recommendedName>
        <fullName>Parafibromin</fullName>
    </recommendedName>
    <alternativeName>
        <fullName>Cell division cycle protein 73 homolog</fullName>
    </alternativeName>
    <alternativeName>
        <fullName>Hyperparathyroidism 2 protein homolog</fullName>
    </alternativeName>
</protein>
<keyword id="KW-0007">Acetylation</keyword>
<keyword id="KW-0131">Cell cycle</keyword>
<keyword id="KW-1017">Isopeptide bond</keyword>
<keyword id="KW-0539">Nucleus</keyword>
<keyword id="KW-0597">Phosphoprotein</keyword>
<keyword id="KW-1185">Reference proteome</keyword>
<keyword id="KW-0804">Transcription</keyword>
<keyword id="KW-0043">Tumor suppressor</keyword>
<keyword id="KW-0832">Ubl conjugation</keyword>
<keyword id="KW-0879">Wnt signaling pathway</keyword>
<gene>
    <name type="primary">Cdc73</name>
</gene>
<evidence type="ECO:0000250" key="1"/>
<evidence type="ECO:0000250" key="2">
    <source>
        <dbReference type="UniProtKB" id="Q6P1J9"/>
    </source>
</evidence>
<evidence type="ECO:0000256" key="3">
    <source>
        <dbReference type="SAM" id="MobiDB-lite"/>
    </source>
</evidence>
<evidence type="ECO:0000269" key="4">
    <source>
    </source>
</evidence>
<evidence type="ECO:0000269" key="5">
    <source>
    </source>
</evidence>
<evidence type="ECO:0000269" key="6">
    <source>
    </source>
</evidence>
<evidence type="ECO:0000269" key="7">
    <source>
    </source>
</evidence>
<evidence type="ECO:0000305" key="8"/>
<organism>
    <name type="scientific">Mus musculus</name>
    <name type="common">Mouse</name>
    <dbReference type="NCBI Taxonomy" id="10090"/>
    <lineage>
        <taxon>Eukaryota</taxon>
        <taxon>Metazoa</taxon>
        <taxon>Chordata</taxon>
        <taxon>Craniata</taxon>
        <taxon>Vertebrata</taxon>
        <taxon>Euteleostomi</taxon>
        <taxon>Mammalia</taxon>
        <taxon>Eutheria</taxon>
        <taxon>Euarchontoglires</taxon>
        <taxon>Glires</taxon>
        <taxon>Rodentia</taxon>
        <taxon>Myomorpha</taxon>
        <taxon>Muroidea</taxon>
        <taxon>Muridae</taxon>
        <taxon>Murinae</taxon>
        <taxon>Mus</taxon>
        <taxon>Mus</taxon>
    </lineage>
</organism>
<proteinExistence type="evidence at protein level"/>
<dbReference type="EMBL" id="AK080861">
    <property type="protein sequence ID" value="BAC38048.1"/>
    <property type="molecule type" value="mRNA"/>
</dbReference>
<dbReference type="EMBL" id="BC027756">
    <property type="protein sequence ID" value="AAH27756.1"/>
    <property type="molecule type" value="mRNA"/>
</dbReference>
<dbReference type="EMBL" id="BC031127">
    <property type="protein sequence ID" value="AAH31127.1"/>
    <property type="molecule type" value="mRNA"/>
</dbReference>
<dbReference type="CCDS" id="CCDS15341.1"/>
<dbReference type="RefSeq" id="NP_666103.1">
    <property type="nucleotide sequence ID" value="NM_145991.2"/>
</dbReference>
<dbReference type="SMR" id="Q8JZM7"/>
<dbReference type="BioGRID" id="229532">
    <property type="interactions" value="8"/>
</dbReference>
<dbReference type="FunCoup" id="Q8JZM7">
    <property type="interactions" value="5455"/>
</dbReference>
<dbReference type="IntAct" id="Q8JZM7">
    <property type="interactions" value="9"/>
</dbReference>
<dbReference type="MINT" id="Q8JZM7"/>
<dbReference type="STRING" id="10090.ENSMUSP00000018337"/>
<dbReference type="iPTMnet" id="Q8JZM7"/>
<dbReference type="PhosphoSitePlus" id="Q8JZM7"/>
<dbReference type="PaxDb" id="10090-ENSMUSP00000018337"/>
<dbReference type="PeptideAtlas" id="Q8JZM7"/>
<dbReference type="ProteomicsDB" id="281276"/>
<dbReference type="Pumba" id="Q8JZM7"/>
<dbReference type="Antibodypedia" id="4286">
    <property type="antibodies" value="265 antibodies from 36 providers"/>
</dbReference>
<dbReference type="Ensembl" id="ENSMUST00000018337.9">
    <property type="protein sequence ID" value="ENSMUSP00000018337.8"/>
    <property type="gene ID" value="ENSMUSG00000026361.10"/>
</dbReference>
<dbReference type="GeneID" id="214498"/>
<dbReference type="KEGG" id="mmu:214498"/>
<dbReference type="UCSC" id="uc007cwx.1">
    <property type="organism name" value="mouse"/>
</dbReference>
<dbReference type="AGR" id="MGI:2384876"/>
<dbReference type="CTD" id="79577"/>
<dbReference type="MGI" id="MGI:2384876">
    <property type="gene designation" value="Cdc73"/>
</dbReference>
<dbReference type="VEuPathDB" id="HostDB:ENSMUSG00000026361"/>
<dbReference type="eggNOG" id="KOG3786">
    <property type="taxonomic scope" value="Eukaryota"/>
</dbReference>
<dbReference type="GeneTree" id="ENSGT00390000001114"/>
<dbReference type="HOGENOM" id="CLU_025849_0_1_1"/>
<dbReference type="InParanoid" id="Q8JZM7"/>
<dbReference type="OMA" id="CAFHLKY"/>
<dbReference type="OrthoDB" id="2186602at2759"/>
<dbReference type="PhylomeDB" id="Q8JZM7"/>
<dbReference type="TreeFam" id="TF313016"/>
<dbReference type="Reactome" id="R-MMU-112382">
    <property type="pathway name" value="Formation of RNA Pol II elongation complex"/>
</dbReference>
<dbReference type="Reactome" id="R-MMU-201722">
    <property type="pathway name" value="Formation of the beta-catenin:TCF transactivating complex"/>
</dbReference>
<dbReference type="Reactome" id="R-MMU-5632684">
    <property type="pathway name" value="Hedgehog 'on' state"/>
</dbReference>
<dbReference type="Reactome" id="R-MMU-674695">
    <property type="pathway name" value="RNA Polymerase II Pre-transcription Events"/>
</dbReference>
<dbReference type="Reactome" id="R-MMU-75955">
    <property type="pathway name" value="RNA Polymerase II Transcription Elongation"/>
</dbReference>
<dbReference type="Reactome" id="R-MMU-8866654">
    <property type="pathway name" value="E3 ubiquitin ligases ubiquitinate target proteins"/>
</dbReference>
<dbReference type="BioGRID-ORCS" id="214498">
    <property type="hits" value="30 hits in 82 CRISPR screens"/>
</dbReference>
<dbReference type="ChiTaRS" id="Cdc73">
    <property type="organism name" value="mouse"/>
</dbReference>
<dbReference type="PRO" id="PR:Q8JZM7"/>
<dbReference type="Proteomes" id="UP000000589">
    <property type="component" value="Chromosome 1"/>
</dbReference>
<dbReference type="RNAct" id="Q8JZM7">
    <property type="molecule type" value="protein"/>
</dbReference>
<dbReference type="Bgee" id="ENSMUSG00000026361">
    <property type="expression patterns" value="Expressed in embryonic post-anal tail and 251 other cell types or tissues"/>
</dbReference>
<dbReference type="ExpressionAtlas" id="Q8JZM7">
    <property type="expression patterns" value="baseline and differential"/>
</dbReference>
<dbReference type="GO" id="GO:0016593">
    <property type="term" value="C:Cdc73/Paf1 complex"/>
    <property type="evidence" value="ECO:0000250"/>
    <property type="project" value="UniProtKB"/>
</dbReference>
<dbReference type="GO" id="GO:0005829">
    <property type="term" value="C:cytosol"/>
    <property type="evidence" value="ECO:0007669"/>
    <property type="project" value="Ensembl"/>
</dbReference>
<dbReference type="GO" id="GO:0005634">
    <property type="term" value="C:nucleus"/>
    <property type="evidence" value="ECO:0000250"/>
    <property type="project" value="UniProtKB"/>
</dbReference>
<dbReference type="GO" id="GO:0000993">
    <property type="term" value="F:RNA polymerase II complex binding"/>
    <property type="evidence" value="ECO:0000250"/>
    <property type="project" value="UniProtKB"/>
</dbReference>
<dbReference type="GO" id="GO:0071222">
    <property type="term" value="P:cellular response to lipopolysaccharide"/>
    <property type="evidence" value="ECO:0000314"/>
    <property type="project" value="UniProtKB"/>
</dbReference>
<dbReference type="GO" id="GO:0001711">
    <property type="term" value="P:endodermal cell fate commitment"/>
    <property type="evidence" value="ECO:0000315"/>
    <property type="project" value="UniProtKB"/>
</dbReference>
<dbReference type="GO" id="GO:0031124">
    <property type="term" value="P:mRNA 3'-end processing"/>
    <property type="evidence" value="ECO:0000250"/>
    <property type="project" value="UniProtKB"/>
</dbReference>
<dbReference type="GO" id="GO:0043066">
    <property type="term" value="P:negative regulation of apoptotic process"/>
    <property type="evidence" value="ECO:0000315"/>
    <property type="project" value="MGI"/>
</dbReference>
<dbReference type="GO" id="GO:0008285">
    <property type="term" value="P:negative regulation of cell population proliferation"/>
    <property type="evidence" value="ECO:0000250"/>
    <property type="project" value="UniProtKB"/>
</dbReference>
<dbReference type="GO" id="GO:0050680">
    <property type="term" value="P:negative regulation of epithelial cell proliferation"/>
    <property type="evidence" value="ECO:0007669"/>
    <property type="project" value="Ensembl"/>
</dbReference>
<dbReference type="GO" id="GO:0048147">
    <property type="term" value="P:negative regulation of fibroblast proliferation"/>
    <property type="evidence" value="ECO:0007669"/>
    <property type="project" value="Ensembl"/>
</dbReference>
<dbReference type="GO" id="GO:2000134">
    <property type="term" value="P:negative regulation of G1/S transition of mitotic cell cycle"/>
    <property type="evidence" value="ECO:0000250"/>
    <property type="project" value="UniProtKB"/>
</dbReference>
<dbReference type="GO" id="GO:0045638">
    <property type="term" value="P:negative regulation of myeloid cell differentiation"/>
    <property type="evidence" value="ECO:0000250"/>
    <property type="project" value="UniProtKB"/>
</dbReference>
<dbReference type="GO" id="GO:0000122">
    <property type="term" value="P:negative regulation of transcription by RNA polymerase II"/>
    <property type="evidence" value="ECO:0000315"/>
    <property type="project" value="UniProtKB"/>
</dbReference>
<dbReference type="GO" id="GO:1902808">
    <property type="term" value="P:positive regulation of cell cycle G1/S phase transition"/>
    <property type="evidence" value="ECO:0000250"/>
    <property type="project" value="UniProtKB"/>
</dbReference>
<dbReference type="GO" id="GO:0031442">
    <property type="term" value="P:positive regulation of mRNA 3'-end processing"/>
    <property type="evidence" value="ECO:0000250"/>
    <property type="project" value="UniProtKB"/>
</dbReference>
<dbReference type="GO" id="GO:0045944">
    <property type="term" value="P:positive regulation of transcription by RNA polymerase II"/>
    <property type="evidence" value="ECO:0007669"/>
    <property type="project" value="Ensembl"/>
</dbReference>
<dbReference type="GO" id="GO:0030177">
    <property type="term" value="P:positive regulation of Wnt signaling pathway"/>
    <property type="evidence" value="ECO:0000250"/>
    <property type="project" value="UniProtKB"/>
</dbReference>
<dbReference type="GO" id="GO:0031648">
    <property type="term" value="P:protein destabilization"/>
    <property type="evidence" value="ECO:0007669"/>
    <property type="project" value="Ensembl"/>
</dbReference>
<dbReference type="GO" id="GO:0001558">
    <property type="term" value="P:regulation of cell growth"/>
    <property type="evidence" value="ECO:0000315"/>
    <property type="project" value="MGI"/>
</dbReference>
<dbReference type="GO" id="GO:0006357">
    <property type="term" value="P:regulation of transcription by RNA polymerase II"/>
    <property type="evidence" value="ECO:0000315"/>
    <property type="project" value="MGI"/>
</dbReference>
<dbReference type="GO" id="GO:0019827">
    <property type="term" value="P:stem cell population maintenance"/>
    <property type="evidence" value="ECO:0000315"/>
    <property type="project" value="UniProtKB"/>
</dbReference>
<dbReference type="GO" id="GO:0006368">
    <property type="term" value="P:transcription elongation by RNA polymerase II"/>
    <property type="evidence" value="ECO:0000250"/>
    <property type="project" value="UniProtKB"/>
</dbReference>
<dbReference type="GO" id="GO:0016055">
    <property type="term" value="P:Wnt signaling pathway"/>
    <property type="evidence" value="ECO:0007669"/>
    <property type="project" value="UniProtKB-KW"/>
</dbReference>
<dbReference type="FunFam" id="3.40.50.11990:FF:000001">
    <property type="entry name" value="Cell division cycle 73"/>
    <property type="match status" value="1"/>
</dbReference>
<dbReference type="Gene3D" id="3.40.50.11990">
    <property type="entry name" value="RNA polymerase II accessory factor, Cdc73 C-terminal domain"/>
    <property type="match status" value="1"/>
</dbReference>
<dbReference type="InterPro" id="IPR007852">
    <property type="entry name" value="Cdc73/Parafibromin"/>
</dbReference>
<dbReference type="InterPro" id="IPR031336">
    <property type="entry name" value="CDC73_C"/>
</dbReference>
<dbReference type="InterPro" id="IPR038103">
    <property type="entry name" value="CDC73_C_sf"/>
</dbReference>
<dbReference type="InterPro" id="IPR032041">
    <property type="entry name" value="Cdc73_N"/>
</dbReference>
<dbReference type="PANTHER" id="PTHR12466">
    <property type="entry name" value="CDC73 DOMAIN PROTEIN"/>
    <property type="match status" value="1"/>
</dbReference>
<dbReference type="PANTHER" id="PTHR12466:SF8">
    <property type="entry name" value="PARAFIBROMIN"/>
    <property type="match status" value="1"/>
</dbReference>
<dbReference type="Pfam" id="PF05179">
    <property type="entry name" value="CDC73_C"/>
    <property type="match status" value="1"/>
</dbReference>
<dbReference type="Pfam" id="PF16050">
    <property type="entry name" value="CDC73_N"/>
    <property type="match status" value="1"/>
</dbReference>
<reference key="1">
    <citation type="journal article" date="2005" name="Science">
        <title>The transcriptional landscape of the mammalian genome.</title>
        <authorList>
            <person name="Carninci P."/>
            <person name="Kasukawa T."/>
            <person name="Katayama S."/>
            <person name="Gough J."/>
            <person name="Frith M.C."/>
            <person name="Maeda N."/>
            <person name="Oyama R."/>
            <person name="Ravasi T."/>
            <person name="Lenhard B."/>
            <person name="Wells C."/>
            <person name="Kodzius R."/>
            <person name="Shimokawa K."/>
            <person name="Bajic V.B."/>
            <person name="Brenner S.E."/>
            <person name="Batalov S."/>
            <person name="Forrest A.R."/>
            <person name="Zavolan M."/>
            <person name="Davis M.J."/>
            <person name="Wilming L.G."/>
            <person name="Aidinis V."/>
            <person name="Allen J.E."/>
            <person name="Ambesi-Impiombato A."/>
            <person name="Apweiler R."/>
            <person name="Aturaliya R.N."/>
            <person name="Bailey T.L."/>
            <person name="Bansal M."/>
            <person name="Baxter L."/>
            <person name="Beisel K.W."/>
            <person name="Bersano T."/>
            <person name="Bono H."/>
            <person name="Chalk A.M."/>
            <person name="Chiu K.P."/>
            <person name="Choudhary V."/>
            <person name="Christoffels A."/>
            <person name="Clutterbuck D.R."/>
            <person name="Crowe M.L."/>
            <person name="Dalla E."/>
            <person name="Dalrymple B.P."/>
            <person name="de Bono B."/>
            <person name="Della Gatta G."/>
            <person name="di Bernardo D."/>
            <person name="Down T."/>
            <person name="Engstrom P."/>
            <person name="Fagiolini M."/>
            <person name="Faulkner G."/>
            <person name="Fletcher C.F."/>
            <person name="Fukushima T."/>
            <person name="Furuno M."/>
            <person name="Futaki S."/>
            <person name="Gariboldi M."/>
            <person name="Georgii-Hemming P."/>
            <person name="Gingeras T.R."/>
            <person name="Gojobori T."/>
            <person name="Green R.E."/>
            <person name="Gustincich S."/>
            <person name="Harbers M."/>
            <person name="Hayashi Y."/>
            <person name="Hensch T.K."/>
            <person name="Hirokawa N."/>
            <person name="Hill D."/>
            <person name="Huminiecki L."/>
            <person name="Iacono M."/>
            <person name="Ikeo K."/>
            <person name="Iwama A."/>
            <person name="Ishikawa T."/>
            <person name="Jakt M."/>
            <person name="Kanapin A."/>
            <person name="Katoh M."/>
            <person name="Kawasawa Y."/>
            <person name="Kelso J."/>
            <person name="Kitamura H."/>
            <person name="Kitano H."/>
            <person name="Kollias G."/>
            <person name="Krishnan S.P."/>
            <person name="Kruger A."/>
            <person name="Kummerfeld S.K."/>
            <person name="Kurochkin I.V."/>
            <person name="Lareau L.F."/>
            <person name="Lazarevic D."/>
            <person name="Lipovich L."/>
            <person name="Liu J."/>
            <person name="Liuni S."/>
            <person name="McWilliam S."/>
            <person name="Madan Babu M."/>
            <person name="Madera M."/>
            <person name="Marchionni L."/>
            <person name="Matsuda H."/>
            <person name="Matsuzawa S."/>
            <person name="Miki H."/>
            <person name="Mignone F."/>
            <person name="Miyake S."/>
            <person name="Morris K."/>
            <person name="Mottagui-Tabar S."/>
            <person name="Mulder N."/>
            <person name="Nakano N."/>
            <person name="Nakauchi H."/>
            <person name="Ng P."/>
            <person name="Nilsson R."/>
            <person name="Nishiguchi S."/>
            <person name="Nishikawa S."/>
            <person name="Nori F."/>
            <person name="Ohara O."/>
            <person name="Okazaki Y."/>
            <person name="Orlando V."/>
            <person name="Pang K.C."/>
            <person name="Pavan W.J."/>
            <person name="Pavesi G."/>
            <person name="Pesole G."/>
            <person name="Petrovsky N."/>
            <person name="Piazza S."/>
            <person name="Reed J."/>
            <person name="Reid J.F."/>
            <person name="Ring B.Z."/>
            <person name="Ringwald M."/>
            <person name="Rost B."/>
            <person name="Ruan Y."/>
            <person name="Salzberg S.L."/>
            <person name="Sandelin A."/>
            <person name="Schneider C."/>
            <person name="Schoenbach C."/>
            <person name="Sekiguchi K."/>
            <person name="Semple C.A."/>
            <person name="Seno S."/>
            <person name="Sessa L."/>
            <person name="Sheng Y."/>
            <person name="Shibata Y."/>
            <person name="Shimada H."/>
            <person name="Shimada K."/>
            <person name="Silva D."/>
            <person name="Sinclair B."/>
            <person name="Sperling S."/>
            <person name="Stupka E."/>
            <person name="Sugiura K."/>
            <person name="Sultana R."/>
            <person name="Takenaka Y."/>
            <person name="Taki K."/>
            <person name="Tammoja K."/>
            <person name="Tan S.L."/>
            <person name="Tang S."/>
            <person name="Taylor M.S."/>
            <person name="Tegner J."/>
            <person name="Teichmann S.A."/>
            <person name="Ueda H.R."/>
            <person name="van Nimwegen E."/>
            <person name="Verardo R."/>
            <person name="Wei C.L."/>
            <person name="Yagi K."/>
            <person name="Yamanishi H."/>
            <person name="Zabarovsky E."/>
            <person name="Zhu S."/>
            <person name="Zimmer A."/>
            <person name="Hide W."/>
            <person name="Bult C."/>
            <person name="Grimmond S.M."/>
            <person name="Teasdale R.D."/>
            <person name="Liu E.T."/>
            <person name="Brusic V."/>
            <person name="Quackenbush J."/>
            <person name="Wahlestedt C."/>
            <person name="Mattick J.S."/>
            <person name="Hume D.A."/>
            <person name="Kai C."/>
            <person name="Sasaki D."/>
            <person name="Tomaru Y."/>
            <person name="Fukuda S."/>
            <person name="Kanamori-Katayama M."/>
            <person name="Suzuki M."/>
            <person name="Aoki J."/>
            <person name="Arakawa T."/>
            <person name="Iida J."/>
            <person name="Imamura K."/>
            <person name="Itoh M."/>
            <person name="Kato T."/>
            <person name="Kawaji H."/>
            <person name="Kawagashira N."/>
            <person name="Kawashima T."/>
            <person name="Kojima M."/>
            <person name="Kondo S."/>
            <person name="Konno H."/>
            <person name="Nakano K."/>
            <person name="Ninomiya N."/>
            <person name="Nishio T."/>
            <person name="Okada M."/>
            <person name="Plessy C."/>
            <person name="Shibata K."/>
            <person name="Shiraki T."/>
            <person name="Suzuki S."/>
            <person name="Tagami M."/>
            <person name="Waki K."/>
            <person name="Watahiki A."/>
            <person name="Okamura-Oho Y."/>
            <person name="Suzuki H."/>
            <person name="Kawai J."/>
            <person name="Hayashizaki Y."/>
        </authorList>
    </citation>
    <scope>NUCLEOTIDE SEQUENCE [LARGE SCALE MRNA]</scope>
    <source>
        <strain>C57BL/6J</strain>
        <tissue>Adrenal gland</tissue>
    </source>
</reference>
<reference key="2">
    <citation type="journal article" date="2004" name="Genome Res.">
        <title>The status, quality, and expansion of the NIH full-length cDNA project: the Mammalian Gene Collection (MGC).</title>
        <authorList>
            <consortium name="The MGC Project Team"/>
        </authorList>
    </citation>
    <scope>NUCLEOTIDE SEQUENCE [LARGE SCALE MRNA]</scope>
    <source>
        <strain>Czech II</strain>
        <strain>FVB/N</strain>
        <tissue>Kidney</tissue>
        <tissue>Mammary tumor</tissue>
    </source>
</reference>
<reference key="3">
    <citation type="journal article" date="2005" name="Oncogene">
        <title>Parafibromin, product of the hyperparathyroidism-jaw tumor syndrome gene HRPT2, regulates cyclin D1/PRAD1 expression.</title>
        <authorList>
            <person name="Woodard G.E."/>
            <person name="Lin L."/>
            <person name="Zhang J.-H."/>
            <person name="Agarwal S.K."/>
            <person name="Marx S.J."/>
            <person name="Simonds W.F."/>
        </authorList>
    </citation>
    <scope>TISSUE SPECIFICITY</scope>
</reference>
<reference key="4">
    <citation type="journal article" date="2009" name="Cell Stem Cell">
        <title>A genome-scale RNAi screen for Oct4 modulators defines a role of the Paf1 complex for embryonic stem cell identity.</title>
        <authorList>
            <person name="Ding L."/>
            <person name="Paszkowski-Rogacz M."/>
            <person name="Nitzsche A."/>
            <person name="Slabicki M.M."/>
            <person name="Heninger A.K."/>
            <person name="de Vries I."/>
            <person name="Kittler R."/>
            <person name="Junqueira M."/>
            <person name="Shevchenko A."/>
            <person name="Schulz H."/>
            <person name="Hubner N."/>
            <person name="Doss M.X."/>
            <person name="Sachinidis A."/>
            <person name="Hescheler J."/>
            <person name="Iacone R."/>
            <person name="Anastassiadis K."/>
            <person name="Stewart A.F."/>
            <person name="Pisabarro M.T."/>
            <person name="Caldarelli A."/>
            <person name="Poser I."/>
            <person name="Theis M."/>
            <person name="Buchholz F."/>
        </authorList>
    </citation>
    <scope>FUNCTION</scope>
</reference>
<reference key="5">
    <citation type="journal article" date="2010" name="Cell">
        <title>A tissue-specific atlas of mouse protein phosphorylation and expression.</title>
        <authorList>
            <person name="Huttlin E.L."/>
            <person name="Jedrychowski M.P."/>
            <person name="Elias J.E."/>
            <person name="Goswami T."/>
            <person name="Rad R."/>
            <person name="Beausoleil S.A."/>
            <person name="Villen J."/>
            <person name="Haas W."/>
            <person name="Sowa M.E."/>
            <person name="Gygi S.P."/>
        </authorList>
    </citation>
    <scope>IDENTIFICATION BY MASS SPECTROMETRY [LARGE SCALE ANALYSIS]</scope>
    <source>
        <tissue>Kidney</tissue>
        <tissue>Testis</tissue>
    </source>
</reference>
<reference key="6">
    <citation type="journal article" date="2016" name="Development">
        <title>Setd5 is essential for mammalian development and the co-transcriptional regulation of histone acetylation.</title>
        <authorList>
            <person name="Osipovich A.B."/>
            <person name="Gangula R."/>
            <person name="Vianna P.G."/>
            <person name="Magnuson M.A."/>
        </authorList>
    </citation>
    <scope>INTERACTION WITH SETD5</scope>
</reference>
<reference key="7">
    <citation type="journal article" date="2016" name="Nat. Cell Biol.">
        <title>Regulation of transcriptional elongation in pluripotency and cell differentiation by the PHD-finger protein Phf5a.</title>
        <authorList>
            <person name="Strikoudis A."/>
            <person name="Lazaris C."/>
            <person name="Trimarchi T."/>
            <person name="Galvao Neto A.L."/>
            <person name="Yang Y."/>
            <person name="Ntziachristos P."/>
            <person name="Rothbart S."/>
            <person name="Buckley S."/>
            <person name="Dolgalev I."/>
            <person name="Stadtfeld M."/>
            <person name="Strahl B.D."/>
            <person name="Dynlacht B.D."/>
            <person name="Tsirigos A."/>
            <person name="Aifantis I."/>
        </authorList>
    </citation>
    <scope>INTERACTION WITH PHF5A</scope>
    <scope>SUBUNIT</scope>
</reference>
<accession>Q8JZM7</accession>